<name>DNLJ_RHOJR</name>
<comment type="function">
    <text evidence="1">DNA ligase that catalyzes the formation of phosphodiester linkages between 5'-phosphoryl and 3'-hydroxyl groups in double-stranded DNA using NAD as a coenzyme and as the energy source for the reaction. It is essential for DNA replication and repair of damaged DNA.</text>
</comment>
<comment type="catalytic activity">
    <reaction evidence="1">
        <text>NAD(+) + (deoxyribonucleotide)n-3'-hydroxyl + 5'-phospho-(deoxyribonucleotide)m = (deoxyribonucleotide)n+m + AMP + beta-nicotinamide D-nucleotide.</text>
        <dbReference type="EC" id="6.5.1.2"/>
    </reaction>
</comment>
<comment type="cofactor">
    <cofactor evidence="1">
        <name>Mg(2+)</name>
        <dbReference type="ChEBI" id="CHEBI:18420"/>
    </cofactor>
    <cofactor evidence="1">
        <name>Mn(2+)</name>
        <dbReference type="ChEBI" id="CHEBI:29035"/>
    </cofactor>
</comment>
<comment type="similarity">
    <text evidence="1">Belongs to the NAD-dependent DNA ligase family. LigA subfamily.</text>
</comment>
<dbReference type="EC" id="6.5.1.2" evidence="1"/>
<dbReference type="EMBL" id="CP000431">
    <property type="protein sequence ID" value="ABG98244.1"/>
    <property type="molecule type" value="Genomic_DNA"/>
</dbReference>
<dbReference type="RefSeq" id="WP_011598363.1">
    <property type="nucleotide sequence ID" value="NC_008268.1"/>
</dbReference>
<dbReference type="SMR" id="Q0S2J2"/>
<dbReference type="KEGG" id="rha:RHA1_ro06469"/>
<dbReference type="PATRIC" id="fig|101510.16.peg.6522"/>
<dbReference type="eggNOG" id="COG0272">
    <property type="taxonomic scope" value="Bacteria"/>
</dbReference>
<dbReference type="HOGENOM" id="CLU_007764_2_1_11"/>
<dbReference type="OrthoDB" id="9759736at2"/>
<dbReference type="Proteomes" id="UP000008710">
    <property type="component" value="Chromosome"/>
</dbReference>
<dbReference type="GO" id="GO:0005829">
    <property type="term" value="C:cytosol"/>
    <property type="evidence" value="ECO:0007669"/>
    <property type="project" value="TreeGrafter"/>
</dbReference>
<dbReference type="GO" id="GO:0003911">
    <property type="term" value="F:DNA ligase (NAD+) activity"/>
    <property type="evidence" value="ECO:0007669"/>
    <property type="project" value="UniProtKB-UniRule"/>
</dbReference>
<dbReference type="GO" id="GO:0046872">
    <property type="term" value="F:metal ion binding"/>
    <property type="evidence" value="ECO:0007669"/>
    <property type="project" value="UniProtKB-KW"/>
</dbReference>
<dbReference type="GO" id="GO:0006281">
    <property type="term" value="P:DNA repair"/>
    <property type="evidence" value="ECO:0007669"/>
    <property type="project" value="UniProtKB-KW"/>
</dbReference>
<dbReference type="GO" id="GO:0006260">
    <property type="term" value="P:DNA replication"/>
    <property type="evidence" value="ECO:0007669"/>
    <property type="project" value="UniProtKB-KW"/>
</dbReference>
<dbReference type="CDD" id="cd00114">
    <property type="entry name" value="LIGANc"/>
    <property type="match status" value="1"/>
</dbReference>
<dbReference type="FunFam" id="1.10.150.20:FF:000006">
    <property type="entry name" value="DNA ligase"/>
    <property type="match status" value="1"/>
</dbReference>
<dbReference type="FunFam" id="1.10.287.610:FF:000002">
    <property type="entry name" value="DNA ligase"/>
    <property type="match status" value="1"/>
</dbReference>
<dbReference type="FunFam" id="2.40.50.140:FF:000012">
    <property type="entry name" value="DNA ligase"/>
    <property type="match status" value="1"/>
</dbReference>
<dbReference type="FunFam" id="3.30.470.30:FF:000001">
    <property type="entry name" value="DNA ligase"/>
    <property type="match status" value="1"/>
</dbReference>
<dbReference type="FunFam" id="3.40.50.10190:FF:000054">
    <property type="entry name" value="DNA ligase"/>
    <property type="match status" value="1"/>
</dbReference>
<dbReference type="Gene3D" id="6.20.10.30">
    <property type="match status" value="1"/>
</dbReference>
<dbReference type="Gene3D" id="1.10.150.20">
    <property type="entry name" value="5' to 3' exonuclease, C-terminal subdomain"/>
    <property type="match status" value="2"/>
</dbReference>
<dbReference type="Gene3D" id="3.40.50.10190">
    <property type="entry name" value="BRCT domain"/>
    <property type="match status" value="1"/>
</dbReference>
<dbReference type="Gene3D" id="3.30.470.30">
    <property type="entry name" value="DNA ligase/mRNA capping enzyme"/>
    <property type="match status" value="1"/>
</dbReference>
<dbReference type="Gene3D" id="1.10.287.610">
    <property type="entry name" value="Helix hairpin bin"/>
    <property type="match status" value="1"/>
</dbReference>
<dbReference type="Gene3D" id="2.40.50.140">
    <property type="entry name" value="Nucleic acid-binding proteins"/>
    <property type="match status" value="1"/>
</dbReference>
<dbReference type="HAMAP" id="MF_01588">
    <property type="entry name" value="DNA_ligase_A"/>
    <property type="match status" value="1"/>
</dbReference>
<dbReference type="InterPro" id="IPR001357">
    <property type="entry name" value="BRCT_dom"/>
</dbReference>
<dbReference type="InterPro" id="IPR036420">
    <property type="entry name" value="BRCT_dom_sf"/>
</dbReference>
<dbReference type="InterPro" id="IPR041663">
    <property type="entry name" value="DisA/LigA_HHH"/>
</dbReference>
<dbReference type="InterPro" id="IPR001679">
    <property type="entry name" value="DNA_ligase"/>
</dbReference>
<dbReference type="InterPro" id="IPR018239">
    <property type="entry name" value="DNA_ligase_AS"/>
</dbReference>
<dbReference type="InterPro" id="IPR033136">
    <property type="entry name" value="DNA_ligase_CS"/>
</dbReference>
<dbReference type="InterPro" id="IPR013839">
    <property type="entry name" value="DNAligase_adenylation"/>
</dbReference>
<dbReference type="InterPro" id="IPR013840">
    <property type="entry name" value="DNAligase_N"/>
</dbReference>
<dbReference type="InterPro" id="IPR012340">
    <property type="entry name" value="NA-bd_OB-fold"/>
</dbReference>
<dbReference type="InterPro" id="IPR004150">
    <property type="entry name" value="NAD_DNA_ligase_OB"/>
</dbReference>
<dbReference type="InterPro" id="IPR010994">
    <property type="entry name" value="RuvA_2-like"/>
</dbReference>
<dbReference type="InterPro" id="IPR004149">
    <property type="entry name" value="Znf_DNAligase_C4"/>
</dbReference>
<dbReference type="NCBIfam" id="TIGR00575">
    <property type="entry name" value="dnlj"/>
    <property type="match status" value="1"/>
</dbReference>
<dbReference type="NCBIfam" id="NF005932">
    <property type="entry name" value="PRK07956.1"/>
    <property type="match status" value="1"/>
</dbReference>
<dbReference type="PANTHER" id="PTHR23389">
    <property type="entry name" value="CHROMOSOME TRANSMISSION FIDELITY FACTOR 18"/>
    <property type="match status" value="1"/>
</dbReference>
<dbReference type="PANTHER" id="PTHR23389:SF9">
    <property type="entry name" value="DNA LIGASE"/>
    <property type="match status" value="1"/>
</dbReference>
<dbReference type="Pfam" id="PF00533">
    <property type="entry name" value="BRCT"/>
    <property type="match status" value="1"/>
</dbReference>
<dbReference type="Pfam" id="PF01653">
    <property type="entry name" value="DNA_ligase_aden"/>
    <property type="match status" value="1"/>
</dbReference>
<dbReference type="Pfam" id="PF03120">
    <property type="entry name" value="DNA_ligase_OB"/>
    <property type="match status" value="1"/>
</dbReference>
<dbReference type="Pfam" id="PF03119">
    <property type="entry name" value="DNA_ligase_ZBD"/>
    <property type="match status" value="1"/>
</dbReference>
<dbReference type="Pfam" id="PF12826">
    <property type="entry name" value="HHH_2"/>
    <property type="match status" value="1"/>
</dbReference>
<dbReference type="Pfam" id="PF22745">
    <property type="entry name" value="Nlig-Ia"/>
    <property type="match status" value="1"/>
</dbReference>
<dbReference type="PIRSF" id="PIRSF001604">
    <property type="entry name" value="LigA"/>
    <property type="match status" value="1"/>
</dbReference>
<dbReference type="SMART" id="SM00292">
    <property type="entry name" value="BRCT"/>
    <property type="match status" value="1"/>
</dbReference>
<dbReference type="SMART" id="SM00532">
    <property type="entry name" value="LIGANc"/>
    <property type="match status" value="1"/>
</dbReference>
<dbReference type="SUPFAM" id="SSF52113">
    <property type="entry name" value="BRCT domain"/>
    <property type="match status" value="1"/>
</dbReference>
<dbReference type="SUPFAM" id="SSF56091">
    <property type="entry name" value="DNA ligase/mRNA capping enzyme, catalytic domain"/>
    <property type="match status" value="1"/>
</dbReference>
<dbReference type="SUPFAM" id="SSF50249">
    <property type="entry name" value="Nucleic acid-binding proteins"/>
    <property type="match status" value="1"/>
</dbReference>
<dbReference type="SUPFAM" id="SSF47781">
    <property type="entry name" value="RuvA domain 2-like"/>
    <property type="match status" value="1"/>
</dbReference>
<dbReference type="PROSITE" id="PS50172">
    <property type="entry name" value="BRCT"/>
    <property type="match status" value="1"/>
</dbReference>
<dbReference type="PROSITE" id="PS01055">
    <property type="entry name" value="DNA_LIGASE_N1"/>
    <property type="match status" value="1"/>
</dbReference>
<dbReference type="PROSITE" id="PS01056">
    <property type="entry name" value="DNA_LIGASE_N2"/>
    <property type="match status" value="1"/>
</dbReference>
<organism>
    <name type="scientific">Rhodococcus jostii (strain RHA1)</name>
    <dbReference type="NCBI Taxonomy" id="101510"/>
    <lineage>
        <taxon>Bacteria</taxon>
        <taxon>Bacillati</taxon>
        <taxon>Actinomycetota</taxon>
        <taxon>Actinomycetes</taxon>
        <taxon>Mycobacteriales</taxon>
        <taxon>Nocardiaceae</taxon>
        <taxon>Rhodococcus</taxon>
    </lineage>
</organism>
<protein>
    <recommendedName>
        <fullName evidence="1">DNA ligase</fullName>
        <ecNumber evidence="1">6.5.1.2</ecNumber>
    </recommendedName>
    <alternativeName>
        <fullName evidence="1">Polydeoxyribonucleotide synthase [NAD(+)]</fullName>
    </alternativeName>
</protein>
<reference key="1">
    <citation type="journal article" date="2006" name="Proc. Natl. Acad. Sci. U.S.A.">
        <title>The complete genome of Rhodococcus sp. RHA1 provides insights into a catabolic powerhouse.</title>
        <authorList>
            <person name="McLeod M.P."/>
            <person name="Warren R.L."/>
            <person name="Hsiao W.W.L."/>
            <person name="Araki N."/>
            <person name="Myhre M."/>
            <person name="Fernandes C."/>
            <person name="Miyazawa D."/>
            <person name="Wong W."/>
            <person name="Lillquist A.L."/>
            <person name="Wang D."/>
            <person name="Dosanjh M."/>
            <person name="Hara H."/>
            <person name="Petrescu A."/>
            <person name="Morin R.D."/>
            <person name="Yang G."/>
            <person name="Stott J.M."/>
            <person name="Schein J.E."/>
            <person name="Shin H."/>
            <person name="Smailus D."/>
            <person name="Siddiqui A.S."/>
            <person name="Marra M.A."/>
            <person name="Jones S.J.M."/>
            <person name="Holt R."/>
            <person name="Brinkman F.S.L."/>
            <person name="Miyauchi K."/>
            <person name="Fukuda M."/>
            <person name="Davies J.E."/>
            <person name="Mohn W.W."/>
            <person name="Eltis L.D."/>
        </authorList>
    </citation>
    <scope>NUCLEOTIDE SEQUENCE [LARGE SCALE GENOMIC DNA]</scope>
    <source>
        <strain>RHA1</strain>
    </source>
</reference>
<feature type="chain" id="PRO_0000313397" description="DNA ligase">
    <location>
        <begin position="1"/>
        <end position="696"/>
    </location>
</feature>
<feature type="domain" description="BRCT" evidence="1">
    <location>
        <begin position="608"/>
        <end position="696"/>
    </location>
</feature>
<feature type="active site" description="N6-AMP-lysine intermediate" evidence="1">
    <location>
        <position position="124"/>
    </location>
</feature>
<feature type="binding site" evidence="1">
    <location>
        <begin position="43"/>
        <end position="47"/>
    </location>
    <ligand>
        <name>NAD(+)</name>
        <dbReference type="ChEBI" id="CHEBI:57540"/>
    </ligand>
</feature>
<feature type="binding site" evidence="1">
    <location>
        <begin position="92"/>
        <end position="93"/>
    </location>
    <ligand>
        <name>NAD(+)</name>
        <dbReference type="ChEBI" id="CHEBI:57540"/>
    </ligand>
</feature>
<feature type="binding site" evidence="1">
    <location>
        <position position="122"/>
    </location>
    <ligand>
        <name>NAD(+)</name>
        <dbReference type="ChEBI" id="CHEBI:57540"/>
    </ligand>
</feature>
<feature type="binding site" evidence="1">
    <location>
        <position position="145"/>
    </location>
    <ligand>
        <name>NAD(+)</name>
        <dbReference type="ChEBI" id="CHEBI:57540"/>
    </ligand>
</feature>
<feature type="binding site" evidence="1">
    <location>
        <position position="185"/>
    </location>
    <ligand>
        <name>NAD(+)</name>
        <dbReference type="ChEBI" id="CHEBI:57540"/>
    </ligand>
</feature>
<feature type="binding site" evidence="1">
    <location>
        <position position="301"/>
    </location>
    <ligand>
        <name>NAD(+)</name>
        <dbReference type="ChEBI" id="CHEBI:57540"/>
    </ligand>
</feature>
<feature type="binding site" evidence="1">
    <location>
        <position position="325"/>
    </location>
    <ligand>
        <name>NAD(+)</name>
        <dbReference type="ChEBI" id="CHEBI:57540"/>
    </ligand>
</feature>
<feature type="binding site" evidence="1">
    <location>
        <position position="419"/>
    </location>
    <ligand>
        <name>Zn(2+)</name>
        <dbReference type="ChEBI" id="CHEBI:29105"/>
    </ligand>
</feature>
<feature type="binding site" evidence="1">
    <location>
        <position position="422"/>
    </location>
    <ligand>
        <name>Zn(2+)</name>
        <dbReference type="ChEBI" id="CHEBI:29105"/>
    </ligand>
</feature>
<feature type="binding site" evidence="1">
    <location>
        <position position="438"/>
    </location>
    <ligand>
        <name>Zn(2+)</name>
        <dbReference type="ChEBI" id="CHEBI:29105"/>
    </ligand>
</feature>
<feature type="binding site" evidence="1">
    <location>
        <position position="444"/>
    </location>
    <ligand>
        <name>Zn(2+)</name>
        <dbReference type="ChEBI" id="CHEBI:29105"/>
    </ligand>
</feature>
<evidence type="ECO:0000255" key="1">
    <source>
        <dbReference type="HAMAP-Rule" id="MF_01588"/>
    </source>
</evidence>
<gene>
    <name evidence="1" type="primary">ligA</name>
    <name type="ordered locus">RHA1_ro06469</name>
</gene>
<proteinExistence type="inferred from homology"/>
<keyword id="KW-0227">DNA damage</keyword>
<keyword id="KW-0234">DNA repair</keyword>
<keyword id="KW-0235">DNA replication</keyword>
<keyword id="KW-0436">Ligase</keyword>
<keyword id="KW-0460">Magnesium</keyword>
<keyword id="KW-0464">Manganese</keyword>
<keyword id="KW-0479">Metal-binding</keyword>
<keyword id="KW-0520">NAD</keyword>
<keyword id="KW-0862">Zinc</keyword>
<sequence length="696" mass="75730">MSESTEAPTPAPGHVREHWNELAEEVRQHQFRYYVRDAPIISDGEFDVLLGELNDLENQYPDLRTPDSPTQLVGGGFSTDFASADHLERMLSLDNVFATDELRTWISRVEQETGPDLHYLCEVKIDGVALNLVYENGRLDRAATRGDGRTGEEVTLNARTIDDIPEKLTGTDEYPIPALLEVRGEVFFRLEDFAALNAALVEEGKAPFANPRNSAAGSLRQKNPAVTARRRLGMICHGLGRSEGFEPVSQYDAYTALAAWGLPVSTHTARVTGADAVVDRVQYWGEHRHDVEHEIDGLVVKVDETSLQRRLGSTSRAPRWAIAYKYPPEEATTKLLDIRVNVGRTGRVTPFAYMEPVTVAGSTVSLATLHNGSEVKRKGVLIGDTVVLRKAGDVIPEVLGPVVDARTGDEYEFVMPTHCPECDTPLAPAKEGDADIRCPNQQYCPAQLRERVFHVAGRGAFDIEVLGYEAATSLLEAKAIGDEGDLFSLTEDDLLKTSLFRTKAGGLSANGRRLLDNLDSAKDKPLWRVLVALSIRHVGPTAARALAGEFGSLARIRESSVEELAAVDGVGGTIAAAVAEWFGVDWHQQIVEKWSAAGVRMEDERDESIPRNLEGLSIVVTGSLETFSRDQAKEAILIRGGKAAGSVSKKTAFVVVGESPGSKHDKAVELGVPVLDEDGFRRLLEGGPDAVAESGV</sequence>
<accession>Q0S2J2</accession>